<protein>
    <recommendedName>
        <fullName evidence="1">Small ribosomal subunit protein uS3</fullName>
    </recommendedName>
    <alternativeName>
        <fullName evidence="2">30S ribosomal protein S3</fullName>
    </alternativeName>
</protein>
<gene>
    <name evidence="1" type="primary">rpsC</name>
    <name evidence="1" type="synonym">rps3</name>
</gene>
<keyword id="KW-0687">Ribonucleoprotein</keyword>
<keyword id="KW-0689">Ribosomal protein</keyword>
<keyword id="KW-0694">RNA-binding</keyword>
<keyword id="KW-0699">rRNA-binding</keyword>
<feature type="chain" id="PRO_0000130062" description="Small ribosomal subunit protein uS3">
    <location>
        <begin position="1"/>
        <end position="231"/>
    </location>
</feature>
<feature type="domain" description="KH type-2" evidence="1">
    <location>
        <begin position="39"/>
        <end position="108"/>
    </location>
</feature>
<evidence type="ECO:0000255" key="1">
    <source>
        <dbReference type="HAMAP-Rule" id="MF_01309"/>
    </source>
</evidence>
<evidence type="ECO:0000305" key="2"/>
<sequence length="231" mass="26316">MGQKTHPIGFRLGVIKDWPSKWYPPKKDYAKLLHEDLKIKNYIKKRYKVAGVSKVEIERIVDKVRIKIHTAKPAIVIGRRGQEVDRLKKTIERMLPGKEISISVLEVKVPELDAQLVAEDIALQIERRVSHRRAMKRAIDNALKAGQKGVKVQVKGRIGGAARARKEWFLVGRMPLQTLRADIDYGFATAYTKYGILSVKVWIYKGDVLKGGKEEILKKIEEEIKQAAKEG</sequence>
<comment type="function">
    <text evidence="1">Binds the lower part of the 30S subunit head. Binds mRNA in the 70S ribosome, positioning it for translation.</text>
</comment>
<comment type="subunit">
    <text evidence="1">Part of the 30S ribosomal subunit. Forms a tight complex with proteins S10 and S14.</text>
</comment>
<comment type="similarity">
    <text evidence="1">Belongs to the universal ribosomal protein uS3 family.</text>
</comment>
<organism>
    <name type="scientific">Aquifex pyrophilus</name>
    <dbReference type="NCBI Taxonomy" id="2714"/>
    <lineage>
        <taxon>Bacteria</taxon>
        <taxon>Pseudomonadati</taxon>
        <taxon>Aquificota</taxon>
        <taxon>Aquificia</taxon>
        <taxon>Aquificales</taxon>
        <taxon>Aquificaceae</taxon>
        <taxon>Aquifex</taxon>
    </lineage>
</organism>
<dbReference type="EMBL" id="AF040100">
    <property type="protein sequence ID" value="AAD08791.1"/>
    <property type="molecule type" value="Genomic_DNA"/>
</dbReference>
<dbReference type="SMR" id="Q9ZI44"/>
<dbReference type="GO" id="GO:0022627">
    <property type="term" value="C:cytosolic small ribosomal subunit"/>
    <property type="evidence" value="ECO:0007669"/>
    <property type="project" value="TreeGrafter"/>
</dbReference>
<dbReference type="GO" id="GO:0003729">
    <property type="term" value="F:mRNA binding"/>
    <property type="evidence" value="ECO:0007669"/>
    <property type="project" value="UniProtKB-UniRule"/>
</dbReference>
<dbReference type="GO" id="GO:0019843">
    <property type="term" value="F:rRNA binding"/>
    <property type="evidence" value="ECO:0007669"/>
    <property type="project" value="UniProtKB-UniRule"/>
</dbReference>
<dbReference type="GO" id="GO:0003735">
    <property type="term" value="F:structural constituent of ribosome"/>
    <property type="evidence" value="ECO:0007669"/>
    <property type="project" value="InterPro"/>
</dbReference>
<dbReference type="GO" id="GO:0006412">
    <property type="term" value="P:translation"/>
    <property type="evidence" value="ECO:0007669"/>
    <property type="project" value="UniProtKB-UniRule"/>
</dbReference>
<dbReference type="CDD" id="cd02412">
    <property type="entry name" value="KH-II_30S_S3"/>
    <property type="match status" value="1"/>
</dbReference>
<dbReference type="FunFam" id="3.30.300.20:FF:000001">
    <property type="entry name" value="30S ribosomal protein S3"/>
    <property type="match status" value="1"/>
</dbReference>
<dbReference type="Gene3D" id="3.30.300.20">
    <property type="match status" value="1"/>
</dbReference>
<dbReference type="Gene3D" id="3.30.1140.32">
    <property type="entry name" value="Ribosomal protein S3, C-terminal domain"/>
    <property type="match status" value="1"/>
</dbReference>
<dbReference type="HAMAP" id="MF_01309_B">
    <property type="entry name" value="Ribosomal_uS3_B"/>
    <property type="match status" value="1"/>
</dbReference>
<dbReference type="InterPro" id="IPR004087">
    <property type="entry name" value="KH_dom"/>
</dbReference>
<dbReference type="InterPro" id="IPR015946">
    <property type="entry name" value="KH_dom-like_a/b"/>
</dbReference>
<dbReference type="InterPro" id="IPR004044">
    <property type="entry name" value="KH_dom_type_2"/>
</dbReference>
<dbReference type="InterPro" id="IPR009019">
    <property type="entry name" value="KH_sf_prok-type"/>
</dbReference>
<dbReference type="InterPro" id="IPR036419">
    <property type="entry name" value="Ribosomal_S3_C_sf"/>
</dbReference>
<dbReference type="InterPro" id="IPR005704">
    <property type="entry name" value="Ribosomal_uS3_bac-typ"/>
</dbReference>
<dbReference type="InterPro" id="IPR001351">
    <property type="entry name" value="Ribosomal_uS3_C"/>
</dbReference>
<dbReference type="InterPro" id="IPR018280">
    <property type="entry name" value="Ribosomal_uS3_CS"/>
</dbReference>
<dbReference type="NCBIfam" id="TIGR01009">
    <property type="entry name" value="rpsC_bact"/>
    <property type="match status" value="1"/>
</dbReference>
<dbReference type="PANTHER" id="PTHR11760">
    <property type="entry name" value="30S/40S RIBOSOMAL PROTEIN S3"/>
    <property type="match status" value="1"/>
</dbReference>
<dbReference type="PANTHER" id="PTHR11760:SF19">
    <property type="entry name" value="SMALL RIBOSOMAL SUBUNIT PROTEIN US3C"/>
    <property type="match status" value="1"/>
</dbReference>
<dbReference type="Pfam" id="PF07650">
    <property type="entry name" value="KH_2"/>
    <property type="match status" value="1"/>
</dbReference>
<dbReference type="Pfam" id="PF00189">
    <property type="entry name" value="Ribosomal_S3_C"/>
    <property type="match status" value="1"/>
</dbReference>
<dbReference type="SMART" id="SM00322">
    <property type="entry name" value="KH"/>
    <property type="match status" value="1"/>
</dbReference>
<dbReference type="SUPFAM" id="SSF54814">
    <property type="entry name" value="Prokaryotic type KH domain (KH-domain type II)"/>
    <property type="match status" value="1"/>
</dbReference>
<dbReference type="SUPFAM" id="SSF54821">
    <property type="entry name" value="Ribosomal protein S3 C-terminal domain"/>
    <property type="match status" value="1"/>
</dbReference>
<dbReference type="PROSITE" id="PS50823">
    <property type="entry name" value="KH_TYPE_2"/>
    <property type="match status" value="1"/>
</dbReference>
<dbReference type="PROSITE" id="PS00548">
    <property type="entry name" value="RIBOSOMAL_S3"/>
    <property type="match status" value="1"/>
</dbReference>
<name>RS3_AQUPY</name>
<accession>Q9ZI44</accession>
<reference key="1">
    <citation type="journal article" date="2000" name="J. Mol. Evol.">
        <title>Phylogenetic depth of the bacterial genera Aquifex and Thermotoga inferred from analysis of ribosomal protein, elongation factor, and RNA polymerase subunit sequences.</title>
        <authorList>
            <person name="Bocchetta M."/>
            <person name="Gribaldo S."/>
            <person name="Sanangelantoni A.M."/>
            <person name="Cammarano P."/>
        </authorList>
    </citation>
    <scope>NUCLEOTIDE SEQUENCE [GENOMIC DNA]</scope>
    <source>
        <strain>DSM 6858 / JCM 9492 / Kol5A</strain>
    </source>
</reference>
<proteinExistence type="inferred from homology"/>